<sequence>MDHTDNELQGTNSSGSLGGLDVRRRIPIKLISKQASKVKPAPRTQRTVSRMPAKAPQGDEEGFDYNEEQRYDCKGGELFGNQRRFPGHLFWDFKINILGEKDDTPVHFCDKCGLPIKVYGRMIPCKHVFCYDCAILHEKKGDKMCPGCSDPVQRIEQCTRGSLFMCSIVQGCKRTYLSQRDLQAHINHRHMRAGKPVTRASLENVHPPIAPPPTDIPDRFIMPPDKHHMSHIPPKQHIMMPPPPLQHVPHEHYNQPHEDIRAPPAELSMAPPPPRSVSQETFRISTRKHSNLITVPIQDDSSSGAREPPPPAPAPAHHHPEYQGQPVVSHPHHIMPPQQHYAPPPPPPPPISHPMPHPPQAAGTPHLVYSQAPPPPMTSAPPPITPPPGHIIAQMPPYMNHPPPGPPPPQHGGPPVTAPPPHHYNPNSLPQFTEDQGTLSPPFTQPGGMSPGIWPAPRGPPPPPRMQGPPSQTPLPGPHHPDQTRYRPYYQ</sequence>
<reference key="1">
    <citation type="journal article" date="2002" name="Nat. Cell Biol.">
        <title>Hakai, a c-Cbl-like protein, ubiquitinates and induces endocytosis of the E-cadherin complex.</title>
        <authorList>
            <person name="Fujita Y."/>
            <person name="Krause G."/>
            <person name="Scheffner M."/>
            <person name="Zechner D."/>
            <person name="Molina Leddy H.E."/>
            <person name="Behrens J."/>
            <person name="Sommer T."/>
            <person name="Birchmeier W."/>
        </authorList>
    </citation>
    <scope>NUCLEOTIDE SEQUENCE [MRNA] (ISOFORM 1)</scope>
    <scope>FUNCTION</scope>
    <scope>INTERACTION WITH CDH1</scope>
    <scope>PHOSPHORYLATION</scope>
    <scope>TISSUE SPECIFICITY</scope>
    <source>
        <tissue>Embryo</tissue>
    </source>
</reference>
<reference key="2">
    <citation type="journal article" date="2005" name="Science">
        <title>The transcriptional landscape of the mammalian genome.</title>
        <authorList>
            <person name="Carninci P."/>
            <person name="Kasukawa T."/>
            <person name="Katayama S."/>
            <person name="Gough J."/>
            <person name="Frith M.C."/>
            <person name="Maeda N."/>
            <person name="Oyama R."/>
            <person name="Ravasi T."/>
            <person name="Lenhard B."/>
            <person name="Wells C."/>
            <person name="Kodzius R."/>
            <person name="Shimokawa K."/>
            <person name="Bajic V.B."/>
            <person name="Brenner S.E."/>
            <person name="Batalov S."/>
            <person name="Forrest A.R."/>
            <person name="Zavolan M."/>
            <person name="Davis M.J."/>
            <person name="Wilming L.G."/>
            <person name="Aidinis V."/>
            <person name="Allen J.E."/>
            <person name="Ambesi-Impiombato A."/>
            <person name="Apweiler R."/>
            <person name="Aturaliya R.N."/>
            <person name="Bailey T.L."/>
            <person name="Bansal M."/>
            <person name="Baxter L."/>
            <person name="Beisel K.W."/>
            <person name="Bersano T."/>
            <person name="Bono H."/>
            <person name="Chalk A.M."/>
            <person name="Chiu K.P."/>
            <person name="Choudhary V."/>
            <person name="Christoffels A."/>
            <person name="Clutterbuck D.R."/>
            <person name="Crowe M.L."/>
            <person name="Dalla E."/>
            <person name="Dalrymple B.P."/>
            <person name="de Bono B."/>
            <person name="Della Gatta G."/>
            <person name="di Bernardo D."/>
            <person name="Down T."/>
            <person name="Engstrom P."/>
            <person name="Fagiolini M."/>
            <person name="Faulkner G."/>
            <person name="Fletcher C.F."/>
            <person name="Fukushima T."/>
            <person name="Furuno M."/>
            <person name="Futaki S."/>
            <person name="Gariboldi M."/>
            <person name="Georgii-Hemming P."/>
            <person name="Gingeras T.R."/>
            <person name="Gojobori T."/>
            <person name="Green R.E."/>
            <person name="Gustincich S."/>
            <person name="Harbers M."/>
            <person name="Hayashi Y."/>
            <person name="Hensch T.K."/>
            <person name="Hirokawa N."/>
            <person name="Hill D."/>
            <person name="Huminiecki L."/>
            <person name="Iacono M."/>
            <person name="Ikeo K."/>
            <person name="Iwama A."/>
            <person name="Ishikawa T."/>
            <person name="Jakt M."/>
            <person name="Kanapin A."/>
            <person name="Katoh M."/>
            <person name="Kawasawa Y."/>
            <person name="Kelso J."/>
            <person name="Kitamura H."/>
            <person name="Kitano H."/>
            <person name="Kollias G."/>
            <person name="Krishnan S.P."/>
            <person name="Kruger A."/>
            <person name="Kummerfeld S.K."/>
            <person name="Kurochkin I.V."/>
            <person name="Lareau L.F."/>
            <person name="Lazarevic D."/>
            <person name="Lipovich L."/>
            <person name="Liu J."/>
            <person name="Liuni S."/>
            <person name="McWilliam S."/>
            <person name="Madan Babu M."/>
            <person name="Madera M."/>
            <person name="Marchionni L."/>
            <person name="Matsuda H."/>
            <person name="Matsuzawa S."/>
            <person name="Miki H."/>
            <person name="Mignone F."/>
            <person name="Miyake S."/>
            <person name="Morris K."/>
            <person name="Mottagui-Tabar S."/>
            <person name="Mulder N."/>
            <person name="Nakano N."/>
            <person name="Nakauchi H."/>
            <person name="Ng P."/>
            <person name="Nilsson R."/>
            <person name="Nishiguchi S."/>
            <person name="Nishikawa S."/>
            <person name="Nori F."/>
            <person name="Ohara O."/>
            <person name="Okazaki Y."/>
            <person name="Orlando V."/>
            <person name="Pang K.C."/>
            <person name="Pavan W.J."/>
            <person name="Pavesi G."/>
            <person name="Pesole G."/>
            <person name="Petrovsky N."/>
            <person name="Piazza S."/>
            <person name="Reed J."/>
            <person name="Reid J.F."/>
            <person name="Ring B.Z."/>
            <person name="Ringwald M."/>
            <person name="Rost B."/>
            <person name="Ruan Y."/>
            <person name="Salzberg S.L."/>
            <person name="Sandelin A."/>
            <person name="Schneider C."/>
            <person name="Schoenbach C."/>
            <person name="Sekiguchi K."/>
            <person name="Semple C.A."/>
            <person name="Seno S."/>
            <person name="Sessa L."/>
            <person name="Sheng Y."/>
            <person name="Shibata Y."/>
            <person name="Shimada H."/>
            <person name="Shimada K."/>
            <person name="Silva D."/>
            <person name="Sinclair B."/>
            <person name="Sperling S."/>
            <person name="Stupka E."/>
            <person name="Sugiura K."/>
            <person name="Sultana R."/>
            <person name="Takenaka Y."/>
            <person name="Taki K."/>
            <person name="Tammoja K."/>
            <person name="Tan S.L."/>
            <person name="Tang S."/>
            <person name="Taylor M.S."/>
            <person name="Tegner J."/>
            <person name="Teichmann S.A."/>
            <person name="Ueda H.R."/>
            <person name="van Nimwegen E."/>
            <person name="Verardo R."/>
            <person name="Wei C.L."/>
            <person name="Yagi K."/>
            <person name="Yamanishi H."/>
            <person name="Zabarovsky E."/>
            <person name="Zhu S."/>
            <person name="Zimmer A."/>
            <person name="Hide W."/>
            <person name="Bult C."/>
            <person name="Grimmond S.M."/>
            <person name="Teasdale R.D."/>
            <person name="Liu E.T."/>
            <person name="Brusic V."/>
            <person name="Quackenbush J."/>
            <person name="Wahlestedt C."/>
            <person name="Mattick J.S."/>
            <person name="Hume D.A."/>
            <person name="Kai C."/>
            <person name="Sasaki D."/>
            <person name="Tomaru Y."/>
            <person name="Fukuda S."/>
            <person name="Kanamori-Katayama M."/>
            <person name="Suzuki M."/>
            <person name="Aoki J."/>
            <person name="Arakawa T."/>
            <person name="Iida J."/>
            <person name="Imamura K."/>
            <person name="Itoh M."/>
            <person name="Kato T."/>
            <person name="Kawaji H."/>
            <person name="Kawagashira N."/>
            <person name="Kawashima T."/>
            <person name="Kojima M."/>
            <person name="Kondo S."/>
            <person name="Konno H."/>
            <person name="Nakano K."/>
            <person name="Ninomiya N."/>
            <person name="Nishio T."/>
            <person name="Okada M."/>
            <person name="Plessy C."/>
            <person name="Shibata K."/>
            <person name="Shiraki T."/>
            <person name="Suzuki S."/>
            <person name="Tagami M."/>
            <person name="Waki K."/>
            <person name="Watahiki A."/>
            <person name="Okamura-Oho Y."/>
            <person name="Suzuki H."/>
            <person name="Kawai J."/>
            <person name="Hayashizaki Y."/>
        </authorList>
    </citation>
    <scope>NUCLEOTIDE SEQUENCE [LARGE SCALE MRNA] (ISOFORMS 3 AND 4)</scope>
    <source>
        <strain>C57BL/6J</strain>
        <tissue>Embryonic stem cell</tissue>
        <tissue>Lung</tissue>
    </source>
</reference>
<reference key="3">
    <citation type="journal article" date="2004" name="Genome Res.">
        <title>The status, quality, and expansion of the NIH full-length cDNA project: the Mammalian Gene Collection (MGC).</title>
        <authorList>
            <consortium name="The MGC Project Team"/>
        </authorList>
    </citation>
    <scope>NUCLEOTIDE SEQUENCE [LARGE SCALE MRNA] (ISOFORM 2)</scope>
    <source>
        <strain>FVB/N</strain>
        <tissue>Colon</tissue>
    </source>
</reference>
<reference key="4">
    <citation type="journal article" date="2012" name="EMBO J.">
        <title>Structure of a novel phosphotyrosine-binding domain in Hakai that targets E-cadherin.</title>
        <authorList>
            <person name="Mukherjee M."/>
            <person name="Chow S.Y."/>
            <person name="Yusoff P."/>
            <person name="Seetharaman J."/>
            <person name="Ng C."/>
            <person name="Sinniah S."/>
            <person name="Koh X.W."/>
            <person name="Asgar N.F."/>
            <person name="Li D."/>
            <person name="Yim D."/>
            <person name="Jackson R.A."/>
            <person name="Yew J."/>
            <person name="Qian J."/>
            <person name="Iyu A."/>
            <person name="Lim Y.P."/>
            <person name="Zhou X."/>
            <person name="Sze S.K."/>
            <person name="Guy G.R."/>
            <person name="Sivaraman J."/>
        </authorList>
    </citation>
    <scope>X-RAY CRYSTALLOGRAPHY (1.9 ANGSTROMS) OF 106-206</scope>
    <scope>FUNCTION</scope>
    <scope>DOMAIN HYB</scope>
    <scope>SUBUNIT</scope>
</reference>
<reference key="5">
    <citation type="journal article" date="2018" name="Genes Dev.">
        <title>Zc3h13/Flacc is required for adenosine methylation by bridging the mRNA-binding factor Rbm15/Spenito to the m6A machinery component Wtap/Fl(2)d.</title>
        <authorList>
            <person name="Knuckles P."/>
            <person name="Lence T."/>
            <person name="Haussmann I.U."/>
            <person name="Jacob D."/>
            <person name="Kreim N."/>
            <person name="Carl S.H."/>
            <person name="Masiello I."/>
            <person name="Hares T."/>
            <person name="Villasenor R."/>
            <person name="Hess D."/>
            <person name="Andrade-Navarro M.A."/>
            <person name="Biggiogera M."/>
            <person name="Helm M."/>
            <person name="Soller M."/>
            <person name="Buehler M."/>
            <person name="Roignant J.Y."/>
        </authorList>
    </citation>
    <scope>FUNCTION</scope>
    <scope>IDENTIFICATION IN THE WMM COMPLEX</scope>
</reference>
<reference key="6">
    <citation type="journal article" date="2018" name="Mol. Cell">
        <title>Zc3h13 regulates nuclear RNA m6A methylation and mouse embryonic stem cell self-renewal.</title>
        <authorList>
            <person name="Wen J."/>
            <person name="Lv R."/>
            <person name="Ma H."/>
            <person name="Shen H."/>
            <person name="He C."/>
            <person name="Wang J."/>
            <person name="Jiao F."/>
            <person name="Liu H."/>
            <person name="Yang P."/>
            <person name="Tan L."/>
            <person name="Lan F."/>
            <person name="Shi Y.G."/>
            <person name="He C."/>
            <person name="Shi Y."/>
            <person name="Diao J."/>
        </authorList>
    </citation>
    <scope>FUNCTION</scope>
    <scope>IDENTIFICATION IN THE WMM COMPLEX</scope>
    <scope>SUBCELLULAR LOCATION</scope>
</reference>
<accession>Q9JIY2</accession>
<accession>Q3TMC0</accession>
<accession>Q8C7W5</accession>
<accession>Q8VCL9</accession>
<proteinExistence type="evidence at protein level"/>
<dbReference type="EC" id="2.3.2.27" evidence="5"/>
<dbReference type="EMBL" id="AF167441">
    <property type="protein sequence ID" value="AAF89617.1"/>
    <property type="molecule type" value="mRNA"/>
</dbReference>
<dbReference type="EMBL" id="AK049141">
    <property type="protein sequence ID" value="BAC33568.1"/>
    <property type="molecule type" value="mRNA"/>
</dbReference>
<dbReference type="EMBL" id="AK166017">
    <property type="protein sequence ID" value="BAE38522.1"/>
    <property type="status" value="ALT_FRAME"/>
    <property type="molecule type" value="mRNA"/>
</dbReference>
<dbReference type="EMBL" id="BC019529">
    <property type="protein sequence ID" value="AAH19529.1"/>
    <property type="molecule type" value="mRNA"/>
</dbReference>
<dbReference type="CCDS" id="CCDS56834.1">
    <molecule id="Q9JIY2-1"/>
</dbReference>
<dbReference type="CCDS" id="CCDS56835.1">
    <molecule id="Q9JIY2-4"/>
</dbReference>
<dbReference type="CCDS" id="CCDS88321.1">
    <molecule id="Q9JIY2-2"/>
</dbReference>
<dbReference type="RefSeq" id="NP_001240776.1">
    <molecule id="Q9JIY2-1"/>
    <property type="nucleotide sequence ID" value="NM_001253847.1"/>
</dbReference>
<dbReference type="RefSeq" id="NP_001240777.1">
    <molecule id="Q9JIY2-4"/>
    <property type="nucleotide sequence ID" value="NM_001253848.1"/>
</dbReference>
<dbReference type="RefSeq" id="NP_598809.1">
    <molecule id="Q9JIY2-2"/>
    <property type="nucleotide sequence ID" value="NM_134048.2"/>
</dbReference>
<dbReference type="PDB" id="2MQ1">
    <property type="method" value="NMR"/>
    <property type="chains" value="A=106-194"/>
</dbReference>
<dbReference type="PDB" id="3VK6">
    <property type="method" value="X-ray"/>
    <property type="resolution" value="1.90 A"/>
    <property type="chains" value="A=106-206"/>
</dbReference>
<dbReference type="PDBsum" id="2MQ1"/>
<dbReference type="PDBsum" id="3VK6"/>
<dbReference type="BMRB" id="Q9JIY2"/>
<dbReference type="SMR" id="Q9JIY2"/>
<dbReference type="BioGRID" id="222714">
    <property type="interactions" value="5"/>
</dbReference>
<dbReference type="ComplexPortal" id="CPX-1609">
    <property type="entry name" value="WMM N6-adenosine-methyltransferase complex"/>
</dbReference>
<dbReference type="CORUM" id="Q9JIY2"/>
<dbReference type="FunCoup" id="Q9JIY2">
    <property type="interactions" value="4304"/>
</dbReference>
<dbReference type="IntAct" id="Q9JIY2">
    <property type="interactions" value="26"/>
</dbReference>
<dbReference type="MINT" id="Q9JIY2"/>
<dbReference type="STRING" id="10090.ENSMUSP00000099038"/>
<dbReference type="GlyGen" id="Q9JIY2">
    <property type="glycosylation" value="3 sites, 1 N-linked glycan (1 site), 1 O-linked glycan (1 site)"/>
</dbReference>
<dbReference type="iPTMnet" id="Q9JIY2"/>
<dbReference type="PhosphoSitePlus" id="Q9JIY2"/>
<dbReference type="SwissPalm" id="Q9JIY2"/>
<dbReference type="PaxDb" id="10090-ENSMUSP00000099038"/>
<dbReference type="PeptideAtlas" id="Q9JIY2"/>
<dbReference type="ProteomicsDB" id="270933">
    <molecule id="Q9JIY2-1"/>
</dbReference>
<dbReference type="ProteomicsDB" id="270934">
    <molecule id="Q9JIY2-2"/>
</dbReference>
<dbReference type="ProteomicsDB" id="270935">
    <molecule id="Q9JIY2-3"/>
</dbReference>
<dbReference type="ProteomicsDB" id="270936">
    <molecule id="Q9JIY2-4"/>
</dbReference>
<dbReference type="Pumba" id="Q9JIY2"/>
<dbReference type="Antibodypedia" id="17227">
    <property type="antibodies" value="208 antibodies from 30 providers"/>
</dbReference>
<dbReference type="DNASU" id="104836"/>
<dbReference type="Ensembl" id="ENSMUST00000101499.10">
    <molecule id="Q9JIY2-1"/>
    <property type="protein sequence ID" value="ENSMUSP00000099038.4"/>
    <property type="gene ID" value="ENSMUSG00000020659.18"/>
</dbReference>
<dbReference type="Ensembl" id="ENSMUST00000185739.8">
    <molecule id="Q9JIY2-2"/>
    <property type="protein sequence ID" value="ENSMUSP00000141007.3"/>
    <property type="gene ID" value="ENSMUSG00000020659.18"/>
</dbReference>
<dbReference type="Ensembl" id="ENSMUST00000188326.3">
    <molecule id="Q9JIY2-4"/>
    <property type="protein sequence ID" value="ENSMUSP00000139809.3"/>
    <property type="gene ID" value="ENSMUSG00000020659.18"/>
</dbReference>
<dbReference type="GeneID" id="104836"/>
<dbReference type="KEGG" id="mmu:104836"/>
<dbReference type="UCSC" id="uc007nhl.2">
    <molecule id="Q9JIY2-2"/>
    <property type="organism name" value="mouse"/>
</dbReference>
<dbReference type="UCSC" id="uc007nhm.2">
    <molecule id="Q9JIY2-1"/>
    <property type="organism name" value="mouse"/>
</dbReference>
<dbReference type="UCSC" id="uc007nhn.2">
    <molecule id="Q9JIY2-4"/>
    <property type="organism name" value="mouse"/>
</dbReference>
<dbReference type="AGR" id="MGI:2144842"/>
<dbReference type="CTD" id="79872"/>
<dbReference type="MGI" id="MGI:2144842">
    <property type="gene designation" value="Cbll1"/>
</dbReference>
<dbReference type="VEuPathDB" id="HostDB:ENSMUSG00000020659"/>
<dbReference type="eggNOG" id="KOG2932">
    <property type="taxonomic scope" value="Eukaryota"/>
</dbReference>
<dbReference type="GeneTree" id="ENSGT00510000047522"/>
<dbReference type="HOGENOM" id="CLU_031291_1_0_1"/>
<dbReference type="InParanoid" id="Q9JIY2"/>
<dbReference type="OMA" id="HLPPKQH"/>
<dbReference type="OrthoDB" id="547746at2759"/>
<dbReference type="PhylomeDB" id="Q9JIY2"/>
<dbReference type="TreeFam" id="TF332910"/>
<dbReference type="Reactome" id="R-MMU-983168">
    <property type="pathway name" value="Antigen processing: Ubiquitination &amp; Proteasome degradation"/>
</dbReference>
<dbReference type="UniPathway" id="UPA00143"/>
<dbReference type="BioGRID-ORCS" id="104836">
    <property type="hits" value="6 hits in 80 CRISPR screens"/>
</dbReference>
<dbReference type="ChiTaRS" id="Cbll1">
    <property type="organism name" value="mouse"/>
</dbReference>
<dbReference type="EvolutionaryTrace" id="Q9JIY2"/>
<dbReference type="PRO" id="PR:Q9JIY2"/>
<dbReference type="Proteomes" id="UP000000589">
    <property type="component" value="Chromosome 12"/>
</dbReference>
<dbReference type="RNAct" id="Q9JIY2">
    <property type="molecule type" value="protein"/>
</dbReference>
<dbReference type="Bgee" id="ENSMUSG00000020659">
    <property type="expression patterns" value="Expressed in rostral migratory stream and 254 other cell types or tissues"/>
</dbReference>
<dbReference type="ExpressionAtlas" id="Q9JIY2">
    <property type="expression patterns" value="baseline and differential"/>
</dbReference>
<dbReference type="GO" id="GO:0005737">
    <property type="term" value="C:cytoplasm"/>
    <property type="evidence" value="ECO:0000314"/>
    <property type="project" value="UniProtKB"/>
</dbReference>
<dbReference type="GO" id="GO:0016607">
    <property type="term" value="C:nuclear speck"/>
    <property type="evidence" value="ECO:0007669"/>
    <property type="project" value="UniProtKB-SubCell"/>
</dbReference>
<dbReference type="GO" id="GO:0005634">
    <property type="term" value="C:nucleus"/>
    <property type="evidence" value="ECO:0000314"/>
    <property type="project" value="UniProtKB"/>
</dbReference>
<dbReference type="GO" id="GO:0036396">
    <property type="term" value="C:RNA N6-methyladenosine methyltransferase complex"/>
    <property type="evidence" value="ECO:0000314"/>
    <property type="project" value="UniProtKB"/>
</dbReference>
<dbReference type="GO" id="GO:0042802">
    <property type="term" value="F:identical protein binding"/>
    <property type="evidence" value="ECO:0000353"/>
    <property type="project" value="IntAct"/>
</dbReference>
<dbReference type="GO" id="GO:0061630">
    <property type="term" value="F:ubiquitin protein ligase activity"/>
    <property type="evidence" value="ECO:0000314"/>
    <property type="project" value="MGI"/>
</dbReference>
<dbReference type="GO" id="GO:0008270">
    <property type="term" value="F:zinc ion binding"/>
    <property type="evidence" value="ECO:0007669"/>
    <property type="project" value="UniProtKB-KW"/>
</dbReference>
<dbReference type="GO" id="GO:0098609">
    <property type="term" value="P:cell-cell adhesion"/>
    <property type="evidence" value="ECO:0007669"/>
    <property type="project" value="Ensembl"/>
</dbReference>
<dbReference type="GO" id="GO:0006397">
    <property type="term" value="P:mRNA processing"/>
    <property type="evidence" value="ECO:0007669"/>
    <property type="project" value="Ensembl"/>
</dbReference>
<dbReference type="GO" id="GO:0007162">
    <property type="term" value="P:negative regulation of cell adhesion"/>
    <property type="evidence" value="ECO:0000314"/>
    <property type="project" value="MGI"/>
</dbReference>
<dbReference type="GO" id="GO:0030335">
    <property type="term" value="P:positive regulation of cell migration"/>
    <property type="evidence" value="ECO:0000314"/>
    <property type="project" value="MGI"/>
</dbReference>
<dbReference type="GO" id="GO:0045807">
    <property type="term" value="P:positive regulation of endocytosis"/>
    <property type="evidence" value="ECO:0000314"/>
    <property type="project" value="MGI"/>
</dbReference>
<dbReference type="GO" id="GO:0016567">
    <property type="term" value="P:protein ubiquitination"/>
    <property type="evidence" value="ECO:0007669"/>
    <property type="project" value="UniProtKB-UniPathway"/>
</dbReference>
<dbReference type="CDD" id="cd16508">
    <property type="entry name" value="RING-HC_HAKAI-like"/>
    <property type="match status" value="1"/>
</dbReference>
<dbReference type="FunFam" id="3.30.40.10:FF:000140">
    <property type="entry name" value="E3 ubiquitin-protein ligase Hakai isoform X2"/>
    <property type="match status" value="1"/>
</dbReference>
<dbReference type="FunFam" id="6.10.140.2210:FF:000001">
    <property type="entry name" value="Putative e3 ubiquitin-protein ligase hakai"/>
    <property type="match status" value="1"/>
</dbReference>
<dbReference type="Gene3D" id="6.10.140.2210">
    <property type="match status" value="1"/>
</dbReference>
<dbReference type="Gene3D" id="3.30.40.10">
    <property type="entry name" value="Zinc/RING finger domain, C3HC4 (zinc finger)"/>
    <property type="match status" value="1"/>
</dbReference>
<dbReference type="InterPro" id="IPR040380">
    <property type="entry name" value="HAKAI-like_RING-HC"/>
</dbReference>
<dbReference type="InterPro" id="IPR040383">
    <property type="entry name" value="HAKAI/CBLL2"/>
</dbReference>
<dbReference type="InterPro" id="IPR041042">
    <property type="entry name" value="Znf_Hakai"/>
</dbReference>
<dbReference type="InterPro" id="IPR001841">
    <property type="entry name" value="Znf_RING"/>
</dbReference>
<dbReference type="InterPro" id="IPR013083">
    <property type="entry name" value="Znf_RING/FYVE/PHD"/>
</dbReference>
<dbReference type="InterPro" id="IPR017907">
    <property type="entry name" value="Znf_RING_CS"/>
</dbReference>
<dbReference type="PANTHER" id="PTHR13480:SF0">
    <property type="entry name" value="E3 UBIQUITIN-PROTEIN LIGASE HAKAI"/>
    <property type="match status" value="1"/>
</dbReference>
<dbReference type="PANTHER" id="PTHR13480">
    <property type="entry name" value="E3 UBIQUITIN-PROTEIN LIGASE HAKAI-RELATED"/>
    <property type="match status" value="1"/>
</dbReference>
<dbReference type="Pfam" id="PF18408">
    <property type="entry name" value="zf_Hakai"/>
    <property type="match status" value="1"/>
</dbReference>
<dbReference type="SUPFAM" id="SSF57850">
    <property type="entry name" value="RING/U-box"/>
    <property type="match status" value="1"/>
</dbReference>
<dbReference type="PROSITE" id="PS00518">
    <property type="entry name" value="ZF_RING_1"/>
    <property type="match status" value="1"/>
</dbReference>
<dbReference type="PROSITE" id="PS50089">
    <property type="entry name" value="ZF_RING_2"/>
    <property type="match status" value="1"/>
</dbReference>
<protein>
    <recommendedName>
        <fullName evidence="12">E3 ubiquitin-protein ligase Hakai</fullName>
        <ecNumber evidence="5">2.3.2.27</ecNumber>
    </recommendedName>
    <alternativeName>
        <fullName evidence="9">Casitas B-lineage lymphoma-transforming sequence-like protein 1</fullName>
        <shortName evidence="9">c-Cbl-like protein 1</shortName>
    </alternativeName>
    <alternativeName>
        <fullName>E-cadherin binding protein E7</fullName>
    </alternativeName>
    <alternativeName>
        <fullName evidence="12">RING-type E3 ubiquitin transferase Hakai</fullName>
    </alternativeName>
</protein>
<comment type="function">
    <text evidence="5 6 7 8">E3 ubiquitin-protein ligase that mediates ubiquitination of several tyrosine-phosphorylated Src substrates, including CDH1, CTTN and DOK1 (PubMed:11836526, PubMed:22252131). Targets CDH1 for endocytosis and degradation (PubMed:11836526). Associated component of the WMM complex, a complex that mediates N6-methyladenosine (m6A) methylation of RNAs, a modification that plays a role in the efficiency of mRNA splicing and RNA processing (PubMed:29535189, PubMed:29547716). Its function in the WMM complex is unknown (PubMed:29535189, PubMed:29547716).</text>
</comment>
<comment type="catalytic activity">
    <reaction evidence="5">
        <text>S-ubiquitinyl-[E2 ubiquitin-conjugating enzyme]-L-cysteine + [acceptor protein]-L-lysine = [E2 ubiquitin-conjugating enzyme]-L-cysteine + N(6)-ubiquitinyl-[acceptor protein]-L-lysine.</text>
        <dbReference type="EC" id="2.3.2.27"/>
    </reaction>
</comment>
<comment type="pathway">
    <text evidence="5">Protein modification; protein ubiquitination.</text>
</comment>
<comment type="subunit">
    <text evidence="1 5 6 7 8">Homodimer (PubMed:22252131). Interacts with tyrosine-phosphorylated SRC substrates (PubMed:11836526, PubMed:22252131). Component of the WMM complex, a N6-methyltransferase complex composed of a catalytic subcomplex, named MAC, and of an associated subcomplex, named MACOM (PubMed:29535189, PubMed:29547716). The MAC subcomplex is composed of METTL3 and METTL14 (PubMed:29535189, PubMed:29547716). The MACOM subcomplex is composed of WTAP, ZC3H13, CBLL1/HAKAI, VIRMA, and, in some cases of RBM15 (RBM15 or RBM15B) (PubMed:29535189, PubMed:29547716). Also a component of a MACOM-like complex, named WTAP complex, composed of WTAP, ZC3H13, CBLL1, VIRMA, RBM15, BCLAF1 and THRAP3 (By similarity).</text>
</comment>
<comment type="interaction">
    <interactant intactId="EBI-7644904">
        <id>Q9JIY2</id>
    </interactant>
    <interactant intactId="EBI-7644904">
        <id>Q9JIY2</id>
        <label>Cbll1</label>
    </interactant>
    <organismsDiffer>false</organismsDiffer>
    <experiments>7</experiments>
</comment>
<comment type="interaction">
    <interactant intactId="EBI-7644904">
        <id>Q9JIY2</id>
    </interactant>
    <interactant intactId="EBI-397955">
        <id>Q60598</id>
        <label>Cttn</label>
    </interactant>
    <organismsDiffer>false</organismsDiffer>
    <experiments>4</experiments>
</comment>
<comment type="interaction">
    <interactant intactId="EBI-7644904">
        <id>Q9JIY2</id>
    </interactant>
    <interactant intactId="EBI-727477">
        <id>P12830</id>
        <label>CDH1</label>
    </interactant>
    <organismsDiffer>true</organismsDiffer>
    <experiments>21</experiments>
</comment>
<comment type="interaction">
    <interactant intactId="EBI-7644904">
        <id>Q9JIY2</id>
    </interactant>
    <interactant intactId="EBI-351886">
        <id>Q14247</id>
        <label>CTTN</label>
    </interactant>
    <organismsDiffer>true</organismsDiffer>
    <experiments>8</experiments>
</comment>
<comment type="interaction">
    <interactant intactId="EBI-7644904">
        <id>Q9JIY2</id>
    </interactant>
    <interactant intactId="EBI-1384360">
        <id>Q99704</id>
        <label>DOK1</label>
    </interactant>
    <organismsDiffer>true</organismsDiffer>
    <experiments>2</experiments>
</comment>
<comment type="subcellular location">
    <subcellularLocation>
        <location evidence="1">Nucleus speckle</location>
    </subcellularLocation>
    <subcellularLocation>
        <location evidence="8">Nucleus</location>
        <location evidence="8">Nucleoplasm</location>
    </subcellularLocation>
    <subcellularLocation>
        <location evidence="8">Cytoplasm</location>
    </subcellularLocation>
    <text evidence="8">Mainly nuclear with some fraction located in the cytoplasm (PubMed:29547716). ZC3H13 is required to anchor component of the MACOM subcomplex, such as VIRMA, in the nucleus (PubMed:29547716).</text>
</comment>
<comment type="alternative products">
    <event type="alternative splicing"/>
    <isoform>
        <id>Q9JIY2-1</id>
        <name>1</name>
        <sequence type="displayed"/>
    </isoform>
    <isoform>
        <id>Q9JIY2-2</id>
        <name>2</name>
        <sequence type="described" ref="VSP_024416"/>
    </isoform>
    <isoform>
        <id>Q9JIY2-3</id>
        <name>3</name>
        <sequence type="described" ref="VSP_024416 VSP_024418 VSP_024419"/>
    </isoform>
    <isoform>
        <id>Q9JIY2-4</id>
        <name>4</name>
        <sequence type="described" ref="VSP_024415 VSP_024417"/>
    </isoform>
</comment>
<comment type="tissue specificity">
    <text evidence="5">Detected in heart, brain, spleen, lung, liver, skeletal muscle, kidney and testis.</text>
</comment>
<comment type="domain">
    <text evidence="6">The HYB domain forms a phosphotyrosine-binding pocket upon dimerization, and mediates as well the recognition of its flanking acidic amino acids.</text>
</comment>
<comment type="PTM">
    <text evidence="5">Phosphorylated on tyrosine residues.</text>
</comment>
<comment type="similarity">
    <text evidence="12">Belongs to the Hakai family.</text>
</comment>
<comment type="sequence caution" evidence="12">
    <conflict type="frameshift">
        <sequence resource="EMBL-CDS" id="BAE38522"/>
    </conflict>
</comment>
<feature type="chain" id="PRO_0000284050" description="E3 ubiquitin-protein ligase Hakai">
    <location>
        <begin position="1"/>
        <end position="491"/>
    </location>
</feature>
<feature type="zinc finger region" description="RING-type" evidence="3">
    <location>
        <begin position="109"/>
        <end position="149"/>
    </location>
</feature>
<feature type="zinc finger region" description="C2H2-type" evidence="2">
    <location>
        <begin position="164"/>
        <end position="190"/>
    </location>
</feature>
<feature type="region of interest" description="Disordered" evidence="4">
    <location>
        <begin position="1"/>
        <end position="20"/>
    </location>
</feature>
<feature type="region of interest" description="Disordered" evidence="4">
    <location>
        <begin position="33"/>
        <end position="61"/>
    </location>
</feature>
<feature type="region of interest" description="HYB domain" evidence="6">
    <location>
        <begin position="148"/>
        <end position="206"/>
    </location>
</feature>
<feature type="region of interest" description="Disordered" evidence="4">
    <location>
        <begin position="255"/>
        <end position="491"/>
    </location>
</feature>
<feature type="compositionally biased region" description="Pro residues" evidence="4">
    <location>
        <begin position="342"/>
        <end position="359"/>
    </location>
</feature>
<feature type="compositionally biased region" description="Pro residues" evidence="4">
    <location>
        <begin position="372"/>
        <end position="389"/>
    </location>
</feature>
<feature type="compositionally biased region" description="Pro residues" evidence="4">
    <location>
        <begin position="399"/>
        <end position="423"/>
    </location>
</feature>
<feature type="compositionally biased region" description="Polar residues" evidence="4">
    <location>
        <begin position="427"/>
        <end position="442"/>
    </location>
</feature>
<feature type="compositionally biased region" description="Pro residues" evidence="4">
    <location>
        <begin position="457"/>
        <end position="478"/>
    </location>
</feature>
<feature type="modified residue" description="Phosphoserine" evidence="1">
    <location>
        <position position="201"/>
    </location>
</feature>
<feature type="modified residue" description="Phosphoserine" evidence="1">
    <location>
        <position position="285"/>
    </location>
</feature>
<feature type="modified residue" description="Phosphoserine" evidence="1">
    <location>
        <position position="290"/>
    </location>
</feature>
<feature type="splice variant" id="VSP_024415" description="In isoform 4." evidence="11">
    <location>
        <begin position="58"/>
        <end position="61"/>
    </location>
</feature>
<feature type="splice variant" id="VSP_024416" description="In isoform 2 and isoform 3." evidence="10 11">
    <location>
        <position position="61"/>
    </location>
</feature>
<feature type="splice variant" id="VSP_024417" description="In isoform 4." evidence="11">
    <location>
        <begin position="277"/>
        <end position="431"/>
    </location>
</feature>
<feature type="splice variant" id="VSP_024418" description="In isoform 3." evidence="11">
    <location>
        <begin position="311"/>
        <end position="374"/>
    </location>
</feature>
<feature type="splice variant" id="VSP_024419" description="In isoform 3." evidence="11">
    <location>
        <begin position="398"/>
        <end position="409"/>
    </location>
</feature>
<feature type="turn" evidence="15">
    <location>
        <begin position="110"/>
        <end position="112"/>
    </location>
</feature>
<feature type="strand" evidence="15">
    <location>
        <begin position="117"/>
        <end position="123"/>
    </location>
</feature>
<feature type="turn" evidence="14">
    <location>
        <begin position="124"/>
        <end position="126"/>
    </location>
</feature>
<feature type="strand" evidence="15">
    <location>
        <begin position="128"/>
        <end position="130"/>
    </location>
</feature>
<feature type="helix" evidence="15">
    <location>
        <begin position="131"/>
        <end position="139"/>
    </location>
</feature>
<feature type="turn" evidence="15">
    <location>
        <begin position="146"/>
        <end position="148"/>
    </location>
</feature>
<feature type="strand" evidence="15">
    <location>
        <begin position="153"/>
        <end position="159"/>
    </location>
</feature>
<feature type="helix" evidence="15">
    <location>
        <begin position="160"/>
        <end position="162"/>
    </location>
</feature>
<feature type="helix" evidence="15">
    <location>
        <begin position="179"/>
        <end position="189"/>
    </location>
</feature>
<feature type="turn" evidence="15">
    <location>
        <begin position="190"/>
        <end position="192"/>
    </location>
</feature>
<organism>
    <name type="scientific">Mus musculus</name>
    <name type="common">Mouse</name>
    <dbReference type="NCBI Taxonomy" id="10090"/>
    <lineage>
        <taxon>Eukaryota</taxon>
        <taxon>Metazoa</taxon>
        <taxon>Chordata</taxon>
        <taxon>Craniata</taxon>
        <taxon>Vertebrata</taxon>
        <taxon>Euteleostomi</taxon>
        <taxon>Mammalia</taxon>
        <taxon>Eutheria</taxon>
        <taxon>Euarchontoglires</taxon>
        <taxon>Glires</taxon>
        <taxon>Rodentia</taxon>
        <taxon>Myomorpha</taxon>
        <taxon>Muroidea</taxon>
        <taxon>Muridae</taxon>
        <taxon>Murinae</taxon>
        <taxon>Mus</taxon>
        <taxon>Mus</taxon>
    </lineage>
</organism>
<keyword id="KW-0002">3D-structure</keyword>
<keyword id="KW-0025">Alternative splicing</keyword>
<keyword id="KW-0963">Cytoplasm</keyword>
<keyword id="KW-0217">Developmental protein</keyword>
<keyword id="KW-0479">Metal-binding</keyword>
<keyword id="KW-0539">Nucleus</keyword>
<keyword id="KW-0597">Phosphoprotein</keyword>
<keyword id="KW-1185">Reference proteome</keyword>
<keyword id="KW-0808">Transferase</keyword>
<keyword id="KW-0833">Ubl conjugation pathway</keyword>
<keyword id="KW-0862">Zinc</keyword>
<keyword id="KW-0863">Zinc-finger</keyword>
<name>HAKAI_MOUSE</name>
<gene>
    <name evidence="13" type="primary">Cbll1</name>
    <name evidence="9" type="synonym">Hakai</name>
</gene>
<evidence type="ECO:0000250" key="1">
    <source>
        <dbReference type="UniProtKB" id="Q75N03"/>
    </source>
</evidence>
<evidence type="ECO:0000255" key="2"/>
<evidence type="ECO:0000255" key="3">
    <source>
        <dbReference type="PROSITE-ProRule" id="PRU00175"/>
    </source>
</evidence>
<evidence type="ECO:0000256" key="4">
    <source>
        <dbReference type="SAM" id="MobiDB-lite"/>
    </source>
</evidence>
<evidence type="ECO:0000269" key="5">
    <source>
    </source>
</evidence>
<evidence type="ECO:0000269" key="6">
    <source>
    </source>
</evidence>
<evidence type="ECO:0000269" key="7">
    <source>
    </source>
</evidence>
<evidence type="ECO:0000269" key="8">
    <source>
    </source>
</evidence>
<evidence type="ECO:0000303" key="9">
    <source>
    </source>
</evidence>
<evidence type="ECO:0000303" key="10">
    <source>
    </source>
</evidence>
<evidence type="ECO:0000303" key="11">
    <source>
    </source>
</evidence>
<evidence type="ECO:0000305" key="12"/>
<evidence type="ECO:0000312" key="13">
    <source>
        <dbReference type="MGI" id="MGI:2144842"/>
    </source>
</evidence>
<evidence type="ECO:0007829" key="14">
    <source>
        <dbReference type="PDB" id="2MQ1"/>
    </source>
</evidence>
<evidence type="ECO:0007829" key="15">
    <source>
        <dbReference type="PDB" id="3VK6"/>
    </source>
</evidence>